<dbReference type="EC" id="1.1.98.6" evidence="2"/>
<dbReference type="EMBL" id="L42023">
    <property type="protein sequence ID" value="AAC21751.1"/>
    <property type="molecule type" value="Genomic_DNA"/>
</dbReference>
<dbReference type="PIR" id="A64047">
    <property type="entry name" value="A64047"/>
</dbReference>
<dbReference type="RefSeq" id="NP_438248.1">
    <property type="nucleotide sequence ID" value="NC_000907.1"/>
</dbReference>
<dbReference type="SMR" id="P43752"/>
<dbReference type="STRING" id="71421.HI_0075"/>
<dbReference type="EnsemblBacteria" id="AAC21751">
    <property type="protein sequence ID" value="AAC21751"/>
    <property type="gene ID" value="HI_0075"/>
</dbReference>
<dbReference type="KEGG" id="hin:HI_0075"/>
<dbReference type="PATRIC" id="fig|71421.8.peg.76"/>
<dbReference type="eggNOG" id="COG1327">
    <property type="taxonomic scope" value="Bacteria"/>
</dbReference>
<dbReference type="eggNOG" id="COG1328">
    <property type="taxonomic scope" value="Bacteria"/>
</dbReference>
<dbReference type="HOGENOM" id="CLU_002707_2_0_6"/>
<dbReference type="OrthoDB" id="9804622at2"/>
<dbReference type="PhylomeDB" id="P43752"/>
<dbReference type="BioCyc" id="HINF71421:G1GJ1-76-MONOMER"/>
<dbReference type="Proteomes" id="UP000000579">
    <property type="component" value="Chromosome"/>
</dbReference>
<dbReference type="GO" id="GO:0031250">
    <property type="term" value="C:anaerobic ribonucleoside-triphosphate reductase complex"/>
    <property type="evidence" value="ECO:0000318"/>
    <property type="project" value="GO_Central"/>
</dbReference>
<dbReference type="GO" id="GO:0005524">
    <property type="term" value="F:ATP binding"/>
    <property type="evidence" value="ECO:0007669"/>
    <property type="project" value="UniProtKB-KW"/>
</dbReference>
<dbReference type="GO" id="GO:0046872">
    <property type="term" value="F:metal ion binding"/>
    <property type="evidence" value="ECO:0007669"/>
    <property type="project" value="UniProtKB-KW"/>
</dbReference>
<dbReference type="GO" id="GO:0008998">
    <property type="term" value="F:ribonucleoside-triphosphate reductase (thioredoxin) activity"/>
    <property type="evidence" value="ECO:0000318"/>
    <property type="project" value="GO_Central"/>
</dbReference>
<dbReference type="GO" id="GO:0009265">
    <property type="term" value="P:2'-deoxyribonucleotide biosynthetic process"/>
    <property type="evidence" value="ECO:0000318"/>
    <property type="project" value="GO_Central"/>
</dbReference>
<dbReference type="GO" id="GO:0006260">
    <property type="term" value="P:DNA replication"/>
    <property type="evidence" value="ECO:0007669"/>
    <property type="project" value="InterPro"/>
</dbReference>
<dbReference type="CDD" id="cd01675">
    <property type="entry name" value="RNR_III"/>
    <property type="match status" value="1"/>
</dbReference>
<dbReference type="Gene3D" id="3.20.70.20">
    <property type="match status" value="1"/>
</dbReference>
<dbReference type="InterPro" id="IPR005144">
    <property type="entry name" value="ATP-cone_dom"/>
</dbReference>
<dbReference type="InterPro" id="IPR019777">
    <property type="entry name" value="Form_AcTrfase_GR_CS"/>
</dbReference>
<dbReference type="InterPro" id="IPR001150">
    <property type="entry name" value="Gly_radical"/>
</dbReference>
<dbReference type="InterPro" id="IPR012833">
    <property type="entry name" value="NrdD"/>
</dbReference>
<dbReference type="NCBIfam" id="TIGR02487">
    <property type="entry name" value="NrdD"/>
    <property type="match status" value="1"/>
</dbReference>
<dbReference type="NCBIfam" id="NF006732">
    <property type="entry name" value="PRK09263.1"/>
    <property type="match status" value="1"/>
</dbReference>
<dbReference type="PANTHER" id="PTHR21075">
    <property type="entry name" value="ANAEROBIC RIBONUCLEOSIDE-TRIPHOSPHATE REDUCTASE"/>
    <property type="match status" value="1"/>
</dbReference>
<dbReference type="PANTHER" id="PTHR21075:SF0">
    <property type="entry name" value="ANAEROBIC RIBONUCLEOSIDE-TRIPHOSPHATE REDUCTASE"/>
    <property type="match status" value="1"/>
</dbReference>
<dbReference type="Pfam" id="PF03477">
    <property type="entry name" value="ATP-cone"/>
    <property type="match status" value="1"/>
</dbReference>
<dbReference type="Pfam" id="PF13597">
    <property type="entry name" value="NRDD"/>
    <property type="match status" value="1"/>
</dbReference>
<dbReference type="SUPFAM" id="SSF51998">
    <property type="entry name" value="PFL-like glycyl radical enzymes"/>
    <property type="match status" value="1"/>
</dbReference>
<dbReference type="PROSITE" id="PS51161">
    <property type="entry name" value="ATP_CONE"/>
    <property type="match status" value="1"/>
</dbReference>
<dbReference type="PROSITE" id="PS00850">
    <property type="entry name" value="GLY_RADICAL_1"/>
    <property type="match status" value="1"/>
</dbReference>
<dbReference type="PROSITE" id="PS51149">
    <property type="entry name" value="GLY_RADICAL_2"/>
    <property type="match status" value="1"/>
</dbReference>
<comment type="function">
    <text evidence="2">Catalyzes the conversion of ribonucleotides into deoxyribonucleotides, which are required for DNA synthesis and repair.</text>
</comment>
<comment type="catalytic activity">
    <reaction evidence="2">
        <text>a ribonucleoside 5'-triphosphate + formate + H(+) = a 2'-deoxyribonucleoside 5'-triphosphate + CO2 + H2O</text>
        <dbReference type="Rhea" id="RHEA:51476"/>
        <dbReference type="ChEBI" id="CHEBI:15377"/>
        <dbReference type="ChEBI" id="CHEBI:15378"/>
        <dbReference type="ChEBI" id="CHEBI:15740"/>
        <dbReference type="ChEBI" id="CHEBI:16526"/>
        <dbReference type="ChEBI" id="CHEBI:61557"/>
        <dbReference type="ChEBI" id="CHEBI:61560"/>
        <dbReference type="EC" id="1.1.98.6"/>
    </reaction>
</comment>
<comment type="activity regulation">
    <text evidence="2">Activated under anaerobic conditions by NrdG, a tightly associated activase. Activation involves the formation of a glycyl radical at Gly-682.</text>
</comment>
<comment type="subunit">
    <text evidence="2">Forms a tetramer composed of two NrdD and two NrdG subunits.</text>
</comment>
<comment type="similarity">
    <text evidence="5">Belongs to the anaerobic ribonucleoside-triphosphate reductase family.</text>
</comment>
<evidence type="ECO:0000250" key="1">
    <source>
        <dbReference type="UniProtKB" id="P07071"/>
    </source>
</evidence>
<evidence type="ECO:0000250" key="2">
    <source>
        <dbReference type="UniProtKB" id="P28903"/>
    </source>
</evidence>
<evidence type="ECO:0000255" key="3">
    <source>
        <dbReference type="PROSITE-ProRule" id="PRU00492"/>
    </source>
</evidence>
<evidence type="ECO:0000255" key="4">
    <source>
        <dbReference type="PROSITE-ProRule" id="PRU00493"/>
    </source>
</evidence>
<evidence type="ECO:0000305" key="5"/>
<gene>
    <name type="primary">nrdD</name>
    <name type="ordered locus">HI_0075</name>
</gene>
<name>NRDD_HAEIN</name>
<organism>
    <name type="scientific">Haemophilus influenzae (strain ATCC 51907 / DSM 11121 / KW20 / Rd)</name>
    <dbReference type="NCBI Taxonomy" id="71421"/>
    <lineage>
        <taxon>Bacteria</taxon>
        <taxon>Pseudomonadati</taxon>
        <taxon>Pseudomonadota</taxon>
        <taxon>Gammaproteobacteria</taxon>
        <taxon>Pasteurellales</taxon>
        <taxon>Pasteurellaceae</taxon>
        <taxon>Haemophilus</taxon>
    </lineage>
</organism>
<accession>P43752</accession>
<proteinExistence type="inferred from homology"/>
<protein>
    <recommendedName>
        <fullName evidence="2">Anaerobic ribonucleoside-triphosphate reductase</fullName>
        <ecNumber evidence="2">1.1.98.6</ecNumber>
    </recommendedName>
    <alternativeName>
        <fullName evidence="2">Class III ribonucleoside-triphosphate reductase</fullName>
    </alternativeName>
</protein>
<sequence>MSNFGVIKRDGSRAEFEIQRIINAIKKAASAVNISDEFYCHQIGQEVGNEIFTRHQGEIDINQIQKIVEDKLMASRYPEVARAYIEYRHDRDLAREKRSQLTKEIEGLIEQSNVELLNENANKDAKVIPTQRDLLAGIVAKHYAKHNILPRDVVEAHEKGEIHYHDLDYAPFFPMFNCMLVDLEGMLSRGFKMGNAEIEPPKSIGTATAVTAQIIAQVASHIYGGTTINRIDEVLSPYVQISYEKHLKHAQEWNVPDVEGYAKALIEKECFDAFQSLEYEVNTLHTSNGQTPFVTFGFGLGTSWQSRLIQQAILKNRIRGLGKNHKTPVFPKLVFTIKKGLNQNKGDPNYDIKQLALECASKRMYPDILNYDQVVKVTGSFKAPMGCRSFLGAYEEKGHEIHDGRNNLGVVSLNLPRIALESKNEEDFYRTLDERLAIAKKALMTRIARLENTKARVAPILYMEGACGVRLKADENVAQIFKNGRASISLGYIGIHETINALYNKGHIFDDEQLREKGIAIVRHLSEAVKRWQKETGYAFSLYSTPSENLCDRFCRLDTKKFGVIEGVTDKGYYTNSYHLDVEKKVNPYDKLDFEMTYPPLASGGFICYGEYPNIQHNLKALEDVWDYSYDRVPYYGTNTPIDECYECGFTGEFECTSKGFVCPKCGNHDSTKVSVTRRVCGYLGSPDARPFNAGKQEEVKRRVKHL</sequence>
<feature type="chain" id="PRO_0000166684" description="Anaerobic ribonucleoside-triphosphate reductase">
    <location>
        <begin position="1"/>
        <end position="707"/>
    </location>
</feature>
<feature type="domain" description="ATP-cone" evidence="3">
    <location>
        <begin position="4"/>
        <end position="95"/>
    </location>
</feature>
<feature type="domain" description="Glycine radical" evidence="4">
    <location>
        <begin position="584"/>
        <end position="707"/>
    </location>
</feature>
<feature type="binding site" evidence="1">
    <location>
        <position position="645"/>
    </location>
    <ligand>
        <name>Zn(2+)</name>
        <dbReference type="ChEBI" id="CHEBI:29105"/>
    </ligand>
</feature>
<feature type="binding site" evidence="1">
    <location>
        <position position="648"/>
    </location>
    <ligand>
        <name>Zn(2+)</name>
        <dbReference type="ChEBI" id="CHEBI:29105"/>
    </ligand>
</feature>
<feature type="binding site" evidence="1">
    <location>
        <position position="663"/>
    </location>
    <ligand>
        <name>Zn(2+)</name>
        <dbReference type="ChEBI" id="CHEBI:29105"/>
    </ligand>
</feature>
<feature type="binding site" evidence="1">
    <location>
        <position position="666"/>
    </location>
    <ligand>
        <name>Zn(2+)</name>
        <dbReference type="ChEBI" id="CHEBI:29105"/>
    </ligand>
</feature>
<feature type="modified residue" description="Glycine radical" evidence="4">
    <location>
        <position position="682"/>
    </location>
</feature>
<keyword id="KW-0067">ATP-binding</keyword>
<keyword id="KW-0479">Metal-binding</keyword>
<keyword id="KW-0547">Nucleotide-binding</keyword>
<keyword id="KW-0556">Organic radical</keyword>
<keyword id="KW-0560">Oxidoreductase</keyword>
<keyword id="KW-1185">Reference proteome</keyword>
<keyword id="KW-0862">Zinc</keyword>
<reference key="1">
    <citation type="journal article" date="1995" name="Science">
        <title>Whole-genome random sequencing and assembly of Haemophilus influenzae Rd.</title>
        <authorList>
            <person name="Fleischmann R.D."/>
            <person name="Adams M.D."/>
            <person name="White O."/>
            <person name="Clayton R.A."/>
            <person name="Kirkness E.F."/>
            <person name="Kerlavage A.R."/>
            <person name="Bult C.J."/>
            <person name="Tomb J.-F."/>
            <person name="Dougherty B.A."/>
            <person name="Merrick J.M."/>
            <person name="McKenney K."/>
            <person name="Sutton G.G."/>
            <person name="FitzHugh W."/>
            <person name="Fields C.A."/>
            <person name="Gocayne J.D."/>
            <person name="Scott J.D."/>
            <person name="Shirley R."/>
            <person name="Liu L.-I."/>
            <person name="Glodek A."/>
            <person name="Kelley J.M."/>
            <person name="Weidman J.F."/>
            <person name="Phillips C.A."/>
            <person name="Spriggs T."/>
            <person name="Hedblom E."/>
            <person name="Cotton M.D."/>
            <person name="Utterback T.R."/>
            <person name="Hanna M.C."/>
            <person name="Nguyen D.T."/>
            <person name="Saudek D.M."/>
            <person name="Brandon R.C."/>
            <person name="Fine L.D."/>
            <person name="Fritchman J.L."/>
            <person name="Fuhrmann J.L."/>
            <person name="Geoghagen N.S.M."/>
            <person name="Gnehm C.L."/>
            <person name="McDonald L.A."/>
            <person name="Small K.V."/>
            <person name="Fraser C.M."/>
            <person name="Smith H.O."/>
            <person name="Venter J.C."/>
        </authorList>
    </citation>
    <scope>NUCLEOTIDE SEQUENCE [LARGE SCALE GENOMIC DNA]</scope>
    <source>
        <strain>ATCC 51907 / DSM 11121 / KW20 / Rd</strain>
    </source>
</reference>